<organism>
    <name type="scientific">Caenorhabditis elegans</name>
    <dbReference type="NCBI Taxonomy" id="6239"/>
    <lineage>
        <taxon>Eukaryota</taxon>
        <taxon>Metazoa</taxon>
        <taxon>Ecdysozoa</taxon>
        <taxon>Nematoda</taxon>
        <taxon>Chromadorea</taxon>
        <taxon>Rhabditida</taxon>
        <taxon>Rhabditina</taxon>
        <taxon>Rhabditomorpha</taxon>
        <taxon>Rhabditoidea</taxon>
        <taxon>Rhabditidae</taxon>
        <taxon>Peloderinae</taxon>
        <taxon>Caenorhabditis</taxon>
    </lineage>
</organism>
<protein>
    <recommendedName>
        <fullName>Fatty acid-binding protein homolog 1</fullName>
    </recommendedName>
    <alternativeName>
        <fullName>Lipid-binding protein 1</fullName>
    </alternativeName>
</protein>
<proteinExistence type="evidence at transcript level"/>
<feature type="signal peptide" evidence="2">
    <location>
        <begin position="1"/>
        <end position="17"/>
    </location>
</feature>
<feature type="chain" id="PRO_0000008737" description="Fatty acid-binding protein homolog 1">
    <location>
        <begin position="18"/>
        <end position="159"/>
    </location>
</feature>
<accession>Q20223</accession>
<keyword id="KW-0446">Lipid-binding</keyword>
<keyword id="KW-1185">Reference proteome</keyword>
<keyword id="KW-0964">Secreted</keyword>
<keyword id="KW-0732">Signal</keyword>
<keyword id="KW-0813">Transport</keyword>
<gene>
    <name type="primary">lbp-1</name>
    <name type="ORF">F40F4.3</name>
</gene>
<comment type="function">
    <text evidence="3">May play a role in sequestering potentially toxic fatty acids and their peroxidation products, or it may be involved in the maintenance of the impermeable lipid layer of the eggshell.</text>
</comment>
<comment type="subcellular location">
    <subcellularLocation>
        <location evidence="3">Secreted</location>
    </subcellularLocation>
    <text>From the hypodermis into the perivitelline fluid of the developing embryo prior to hatching.</text>
</comment>
<comment type="tissue specificity">
    <text evidence="3">First detected in hypodermal precursor cells at the time of gastrulation. From the two-fold stage through to three-fold stages, expression is localized exclusively to hyp-7 but disappears in newly hatched L1s and subsequent developmental stages. Expression from L1 to adult stages is found in a single neuron in the ventral cord with a process into the nerve ring.</text>
</comment>
<comment type="domain">
    <text evidence="1">Forms a beta-barrel structure that accommodates hydrophobic ligands in its interior.</text>
</comment>
<comment type="similarity">
    <text evidence="4">Belongs to the calycin superfamily. Fatty-acid binding protein (FABP) family.</text>
</comment>
<sequence length="159" mass="18284">MCAKIALLLVLVGAASAAVLPDKFYGTFDLDHSENFDEYLTAKGYGWFTRKLVTFATFKKVFTKTSNKNLFDYSNLTSKKDVHYKNVQLGKAFQGEGLDSTKHEITFTLKDGHLFEHHKPLEGGDAKEETYEYLFDKEFLLVRMSFNGVEGRRFYKRLP</sequence>
<evidence type="ECO:0000250" key="1"/>
<evidence type="ECO:0000255" key="2"/>
<evidence type="ECO:0000269" key="3">
    <source>
    </source>
</evidence>
<evidence type="ECO:0000305" key="4"/>
<reference key="1">
    <citation type="journal article" date="1998" name="Science">
        <title>Genome sequence of the nematode C. elegans: a platform for investigating biology.</title>
        <authorList>
            <consortium name="The C. elegans sequencing consortium"/>
        </authorList>
    </citation>
    <scope>NUCLEOTIDE SEQUENCE [LARGE SCALE GENOMIC DNA]</scope>
    <source>
        <strain>Bristol N2</strain>
    </source>
</reference>
<reference key="2">
    <citation type="journal article" date="2000" name="Mol. Biochem. Parasitol.">
        <title>Secretion of a novel class of iFABPs in nematodes: coordinate use of the Ascaris/Caenorhabditis model systems.</title>
        <authorList>
            <person name="Plenefisch J."/>
            <person name="Xiao H."/>
            <person name="Mei B."/>
            <person name="Geng J."/>
            <person name="Komuniecki P.R."/>
            <person name="Komuniecki R."/>
        </authorList>
    </citation>
    <scope>FUNCTION</scope>
    <scope>SUBCELLULAR LOCATION</scope>
    <scope>TISSUE SPECIFICITY</scope>
</reference>
<name>FABP1_CAEEL</name>
<dbReference type="EMBL" id="FO081243">
    <property type="protein sequence ID" value="CCD70142.1"/>
    <property type="molecule type" value="Genomic_DNA"/>
</dbReference>
<dbReference type="PIR" id="T16309">
    <property type="entry name" value="T16309"/>
</dbReference>
<dbReference type="RefSeq" id="NP_508557.1">
    <property type="nucleotide sequence ID" value="NM_076156.8"/>
</dbReference>
<dbReference type="SMR" id="Q20223"/>
<dbReference type="BioGRID" id="45557">
    <property type="interactions" value="18"/>
</dbReference>
<dbReference type="DIP" id="DIP-24433N"/>
<dbReference type="FunCoup" id="Q20223">
    <property type="interactions" value="42"/>
</dbReference>
<dbReference type="IntAct" id="Q20223">
    <property type="interactions" value="2"/>
</dbReference>
<dbReference type="STRING" id="6239.F40F4.3.2"/>
<dbReference type="PaxDb" id="6239-F40F4.3.1"/>
<dbReference type="PeptideAtlas" id="Q20223"/>
<dbReference type="EnsemblMetazoa" id="F40F4.3.1">
    <property type="protein sequence ID" value="F40F4.3.1"/>
    <property type="gene ID" value="WBGene00002253"/>
</dbReference>
<dbReference type="GeneID" id="180616"/>
<dbReference type="KEGG" id="cel:CELE_F40F4.3"/>
<dbReference type="UCSC" id="F40F4.3.1">
    <property type="organism name" value="c. elegans"/>
</dbReference>
<dbReference type="AGR" id="WB:WBGene00002253"/>
<dbReference type="CTD" id="180616"/>
<dbReference type="WormBase" id="F40F4.3">
    <property type="protein sequence ID" value="CE04533"/>
    <property type="gene ID" value="WBGene00002253"/>
    <property type="gene designation" value="lbp-1"/>
</dbReference>
<dbReference type="eggNOG" id="KOG4015">
    <property type="taxonomic scope" value="Eukaryota"/>
</dbReference>
<dbReference type="GeneTree" id="ENSGT00390000007345"/>
<dbReference type="HOGENOM" id="CLU_113772_2_1_1"/>
<dbReference type="InParanoid" id="Q20223"/>
<dbReference type="OMA" id="FEKHHPI"/>
<dbReference type="OrthoDB" id="412780at2759"/>
<dbReference type="PhylomeDB" id="Q20223"/>
<dbReference type="PRO" id="PR:Q20223"/>
<dbReference type="Proteomes" id="UP000001940">
    <property type="component" value="Chromosome X"/>
</dbReference>
<dbReference type="Bgee" id="WBGene00002253">
    <property type="expression patterns" value="Expressed in embryo and 3 other cell types or tissues"/>
</dbReference>
<dbReference type="GO" id="GO:0005576">
    <property type="term" value="C:extracellular region"/>
    <property type="evidence" value="ECO:0007669"/>
    <property type="project" value="UniProtKB-SubCell"/>
</dbReference>
<dbReference type="GO" id="GO:0008289">
    <property type="term" value="F:lipid binding"/>
    <property type="evidence" value="ECO:0007669"/>
    <property type="project" value="UniProtKB-KW"/>
</dbReference>
<dbReference type="CDD" id="cd00742">
    <property type="entry name" value="FABP"/>
    <property type="match status" value="1"/>
</dbReference>
<dbReference type="Gene3D" id="2.40.128.20">
    <property type="match status" value="1"/>
</dbReference>
<dbReference type="InterPro" id="IPR012674">
    <property type="entry name" value="Calycin"/>
</dbReference>
<dbReference type="InterPro" id="IPR000463">
    <property type="entry name" value="Fatty_acid-bd"/>
</dbReference>
<dbReference type="InterPro" id="IPR040094">
    <property type="entry name" value="Lbp1-4"/>
</dbReference>
<dbReference type="PANTHER" id="PTHR22725:SF2">
    <property type="entry name" value="FATTY ACID-BINDING PROTEIN HOMOLOG 1-RELATED"/>
    <property type="match status" value="1"/>
</dbReference>
<dbReference type="PANTHER" id="PTHR22725">
    <property type="entry name" value="FATTY ACID-BINDING PROTEIN HOMOLOG 1-RELATED-RELATED"/>
    <property type="match status" value="1"/>
</dbReference>
<dbReference type="PRINTS" id="PR00178">
    <property type="entry name" value="FATTYACIDBP"/>
</dbReference>
<dbReference type="SUPFAM" id="SSF50814">
    <property type="entry name" value="Lipocalins"/>
    <property type="match status" value="1"/>
</dbReference>
<dbReference type="PROSITE" id="PS00214">
    <property type="entry name" value="FABP"/>
    <property type="match status" value="1"/>
</dbReference>